<proteinExistence type="inferred from homology"/>
<sequence>MKTKVGFNRLNRKSSHRKALLKNMVISLFKHEKITSTKAKLSEVKRFAEKLITRAKIDSVHNRREVSKFIHDKFILNKLFTKISPIFKERKGGYVRVIKLGRRYGDAAEMAILELVDKTLEEK</sequence>
<name>RL17_BORHD</name>
<feature type="chain" id="PRO_1000144383" description="Large ribosomal subunit protein bL17">
    <location>
        <begin position="1"/>
        <end position="123"/>
    </location>
</feature>
<protein>
    <recommendedName>
        <fullName evidence="1">Large ribosomal subunit protein bL17</fullName>
    </recommendedName>
    <alternativeName>
        <fullName evidence="2">50S ribosomal protein L17</fullName>
    </alternativeName>
</protein>
<evidence type="ECO:0000255" key="1">
    <source>
        <dbReference type="HAMAP-Rule" id="MF_01368"/>
    </source>
</evidence>
<evidence type="ECO:0000305" key="2"/>
<organism>
    <name type="scientific">Borrelia hermsii (strain HS1 / DAH)</name>
    <dbReference type="NCBI Taxonomy" id="314723"/>
    <lineage>
        <taxon>Bacteria</taxon>
        <taxon>Pseudomonadati</taxon>
        <taxon>Spirochaetota</taxon>
        <taxon>Spirochaetia</taxon>
        <taxon>Spirochaetales</taxon>
        <taxon>Borreliaceae</taxon>
        <taxon>Borrelia</taxon>
    </lineage>
</organism>
<comment type="subunit">
    <text evidence="1">Part of the 50S ribosomal subunit. Contacts protein L32.</text>
</comment>
<comment type="similarity">
    <text evidence="1">Belongs to the bacterial ribosomal protein bL17 family.</text>
</comment>
<dbReference type="EMBL" id="CP000048">
    <property type="protein sequence ID" value="AAX17012.1"/>
    <property type="molecule type" value="Genomic_DNA"/>
</dbReference>
<dbReference type="RefSeq" id="WP_012422264.1">
    <property type="nucleotide sequence ID" value="NZ_CP073136.1"/>
</dbReference>
<dbReference type="SMR" id="B2S0K6"/>
<dbReference type="GeneID" id="71843321"/>
<dbReference type="KEGG" id="bhr:BH0503"/>
<dbReference type="HOGENOM" id="CLU_074407_2_0_12"/>
<dbReference type="Proteomes" id="UP000008834">
    <property type="component" value="Chromosome"/>
</dbReference>
<dbReference type="GO" id="GO:0022625">
    <property type="term" value="C:cytosolic large ribosomal subunit"/>
    <property type="evidence" value="ECO:0007669"/>
    <property type="project" value="TreeGrafter"/>
</dbReference>
<dbReference type="GO" id="GO:0003735">
    <property type="term" value="F:structural constituent of ribosome"/>
    <property type="evidence" value="ECO:0007669"/>
    <property type="project" value="InterPro"/>
</dbReference>
<dbReference type="GO" id="GO:0006412">
    <property type="term" value="P:translation"/>
    <property type="evidence" value="ECO:0007669"/>
    <property type="project" value="UniProtKB-UniRule"/>
</dbReference>
<dbReference type="Gene3D" id="3.90.1030.10">
    <property type="entry name" value="Ribosomal protein L17"/>
    <property type="match status" value="1"/>
</dbReference>
<dbReference type="HAMAP" id="MF_01368">
    <property type="entry name" value="Ribosomal_bL17"/>
    <property type="match status" value="1"/>
</dbReference>
<dbReference type="InterPro" id="IPR000456">
    <property type="entry name" value="Ribosomal_bL17"/>
</dbReference>
<dbReference type="InterPro" id="IPR036373">
    <property type="entry name" value="Ribosomal_bL17_sf"/>
</dbReference>
<dbReference type="NCBIfam" id="TIGR00059">
    <property type="entry name" value="L17"/>
    <property type="match status" value="1"/>
</dbReference>
<dbReference type="PANTHER" id="PTHR14413:SF16">
    <property type="entry name" value="LARGE RIBOSOMAL SUBUNIT PROTEIN BL17M"/>
    <property type="match status" value="1"/>
</dbReference>
<dbReference type="PANTHER" id="PTHR14413">
    <property type="entry name" value="RIBOSOMAL PROTEIN L17"/>
    <property type="match status" value="1"/>
</dbReference>
<dbReference type="Pfam" id="PF01196">
    <property type="entry name" value="Ribosomal_L17"/>
    <property type="match status" value="1"/>
</dbReference>
<dbReference type="SUPFAM" id="SSF64263">
    <property type="entry name" value="Prokaryotic ribosomal protein L17"/>
    <property type="match status" value="1"/>
</dbReference>
<keyword id="KW-0687">Ribonucleoprotein</keyword>
<keyword id="KW-0689">Ribosomal protein</keyword>
<reference key="1">
    <citation type="submission" date="2004-12" db="EMBL/GenBank/DDBJ databases">
        <title>The genome sequence of Borrelia hermsii and Borrelia turicatae: comparative analysis of two agents of endemic N. America relapsing fever.</title>
        <authorList>
            <person name="Porcella S.F."/>
            <person name="Raffel S.J."/>
            <person name="Schrumpf M.E."/>
            <person name="Montgomery B."/>
            <person name="Smith T."/>
            <person name="Schwan T.G."/>
        </authorList>
    </citation>
    <scope>NUCLEOTIDE SEQUENCE [LARGE SCALE GENOMIC DNA]</scope>
    <source>
        <strain>HS1 / DAH</strain>
    </source>
</reference>
<accession>B2S0K6</accession>
<gene>
    <name evidence="1" type="primary">rplQ</name>
    <name type="ordered locus">BH0503</name>
</gene>